<evidence type="ECO:0000250" key="1"/>
<evidence type="ECO:0000255" key="2"/>
<evidence type="ECO:0000255" key="3">
    <source>
        <dbReference type="PROSITE-ProRule" id="PRU00192"/>
    </source>
</evidence>
<evidence type="ECO:0000305" key="4"/>
<reference key="1">
    <citation type="journal article" date="2009" name="PLoS Genet.">
        <title>The genome of Nectria haematococca: contribution of supernumerary chromosomes to gene expansion.</title>
        <authorList>
            <person name="Coleman J.J."/>
            <person name="Rounsley S.D."/>
            <person name="Rodriguez-Carres M."/>
            <person name="Kuo A."/>
            <person name="Wasmann C.C."/>
            <person name="Grimwood J."/>
            <person name="Schmutz J."/>
            <person name="Taga M."/>
            <person name="White G.J."/>
            <person name="Zhou S."/>
            <person name="Schwartz D.C."/>
            <person name="Freitag M."/>
            <person name="Ma L.-J."/>
            <person name="Danchin E.G.J."/>
            <person name="Henrissat B."/>
            <person name="Coutinho P.M."/>
            <person name="Nelson D.R."/>
            <person name="Straney D."/>
            <person name="Napoli C.A."/>
            <person name="Barker B.M."/>
            <person name="Gribskov M."/>
            <person name="Rep M."/>
            <person name="Kroken S."/>
            <person name="Molnar I."/>
            <person name="Rensing C."/>
            <person name="Kennell J.C."/>
            <person name="Zamora J."/>
            <person name="Farman M.L."/>
            <person name="Selker E.U."/>
            <person name="Salamov A."/>
            <person name="Shapiro H."/>
            <person name="Pangilinan J."/>
            <person name="Lindquist E."/>
            <person name="Lamers C."/>
            <person name="Grigoriev I.V."/>
            <person name="Geiser D.M."/>
            <person name="Covert S.F."/>
            <person name="Temporini E."/>
            <person name="VanEtten H.D."/>
        </authorList>
    </citation>
    <scope>NUCLEOTIDE SEQUENCE [LARGE SCALE GENOMIC DNA]</scope>
    <source>
        <strain>ATCC MYA-4622 / CBS 123669 / FGSC 9596 / NRRL 45880 / 77-13-4</strain>
    </source>
</reference>
<organism>
    <name type="scientific">Fusarium vanettenii (strain ATCC MYA-4622 / CBS 123669 / FGSC 9596 / NRRL 45880 / 77-13-4)</name>
    <name type="common">Fusarium solani subsp. pisi</name>
    <dbReference type="NCBI Taxonomy" id="660122"/>
    <lineage>
        <taxon>Eukaryota</taxon>
        <taxon>Fungi</taxon>
        <taxon>Dikarya</taxon>
        <taxon>Ascomycota</taxon>
        <taxon>Pezizomycotina</taxon>
        <taxon>Sordariomycetes</taxon>
        <taxon>Hypocreomycetidae</taxon>
        <taxon>Hypocreales</taxon>
        <taxon>Nectriaceae</taxon>
        <taxon>Fusarium</taxon>
        <taxon>Fusarium solani species complex</taxon>
        <taxon>Fusarium vanettenii</taxon>
    </lineage>
</organism>
<dbReference type="EMBL" id="GG698910">
    <property type="protein sequence ID" value="EEU41016.1"/>
    <property type="molecule type" value="Genomic_DNA"/>
</dbReference>
<dbReference type="RefSeq" id="XP_003046729.1">
    <property type="nucleotide sequence ID" value="XM_003046683.1"/>
</dbReference>
<dbReference type="SMR" id="C7Z504"/>
<dbReference type="FunCoup" id="C7Z504">
    <property type="interactions" value="141"/>
</dbReference>
<dbReference type="STRING" id="660122.C7Z504"/>
<dbReference type="EnsemblFungi" id="NechaT91233">
    <property type="protein sequence ID" value="NechaP91233"/>
    <property type="gene ID" value="NechaG91233"/>
</dbReference>
<dbReference type="GeneID" id="9678255"/>
<dbReference type="KEGG" id="nhe:NECHADRAFT_91233"/>
<dbReference type="VEuPathDB" id="FungiDB:NECHADRAFT_91233"/>
<dbReference type="eggNOG" id="ENOG502QW7A">
    <property type="taxonomic scope" value="Eukaryota"/>
</dbReference>
<dbReference type="HOGENOM" id="CLU_043316_1_0_1"/>
<dbReference type="InParanoid" id="C7Z504"/>
<dbReference type="OMA" id="NIVWIFY"/>
<dbReference type="OrthoDB" id="5983572at2759"/>
<dbReference type="Proteomes" id="UP000005206">
    <property type="component" value="Unassembled WGS sequence"/>
</dbReference>
<dbReference type="GO" id="GO:0005886">
    <property type="term" value="C:plasma membrane"/>
    <property type="evidence" value="ECO:0007669"/>
    <property type="project" value="UniProtKB-SubCell"/>
</dbReference>
<dbReference type="GO" id="GO:0030833">
    <property type="term" value="P:regulation of actin filament polymerization"/>
    <property type="evidence" value="ECO:0007669"/>
    <property type="project" value="TreeGrafter"/>
</dbReference>
<dbReference type="CDD" id="cd11855">
    <property type="entry name" value="SH3_Sho1p"/>
    <property type="match status" value="1"/>
</dbReference>
<dbReference type="FunFam" id="2.30.30.40:FF:000213">
    <property type="entry name" value="High osmolarity signaling protein SHO1"/>
    <property type="match status" value="1"/>
</dbReference>
<dbReference type="Gene3D" id="2.30.30.40">
    <property type="entry name" value="SH3 Domains"/>
    <property type="match status" value="1"/>
</dbReference>
<dbReference type="InterPro" id="IPR036028">
    <property type="entry name" value="SH3-like_dom_sf"/>
</dbReference>
<dbReference type="InterPro" id="IPR001452">
    <property type="entry name" value="SH3_domain"/>
</dbReference>
<dbReference type="InterPro" id="IPR035522">
    <property type="entry name" value="Sho1_SH3"/>
</dbReference>
<dbReference type="PANTHER" id="PTHR15735">
    <property type="entry name" value="FCH AND DOUBLE SH3 DOMAINS PROTEIN"/>
    <property type="match status" value="1"/>
</dbReference>
<dbReference type="PANTHER" id="PTHR15735:SF20">
    <property type="entry name" value="HIGH OSMOLARITY SIGNALING PROTEIN SHO1"/>
    <property type="match status" value="1"/>
</dbReference>
<dbReference type="Pfam" id="PF00018">
    <property type="entry name" value="SH3_1"/>
    <property type="match status" value="1"/>
</dbReference>
<dbReference type="PRINTS" id="PR00452">
    <property type="entry name" value="SH3DOMAIN"/>
</dbReference>
<dbReference type="SMART" id="SM00326">
    <property type="entry name" value="SH3"/>
    <property type="match status" value="1"/>
</dbReference>
<dbReference type="SUPFAM" id="SSF50044">
    <property type="entry name" value="SH3-domain"/>
    <property type="match status" value="1"/>
</dbReference>
<dbReference type="PROSITE" id="PS50002">
    <property type="entry name" value="SH3"/>
    <property type="match status" value="1"/>
</dbReference>
<gene>
    <name type="primary">SHO1</name>
    <name type="ORF">NECHADRAFT_91233</name>
</gene>
<proteinExistence type="inferred from homology"/>
<comment type="function">
    <text evidence="1">Plasma membrane osmosensor that activates the high osmolarity glycerol (HOG) MAPK signaling pathway in response to high osmolarity.</text>
</comment>
<comment type="subunit">
    <text evidence="1">Forms homooligomers.</text>
</comment>
<comment type="subcellular location">
    <subcellularLocation>
        <location evidence="1">Cell membrane</location>
        <topology evidence="1">Multi-pass membrane protein</topology>
    </subcellularLocation>
</comment>
<comment type="similarity">
    <text evidence="4">Belongs to the SHO1 family.</text>
</comment>
<keyword id="KW-1003">Cell membrane</keyword>
<keyword id="KW-0472">Membrane</keyword>
<keyword id="KW-1185">Reference proteome</keyword>
<keyword id="KW-0728">SH3 domain</keyword>
<keyword id="KW-0346">Stress response</keyword>
<keyword id="KW-0812">Transmembrane</keyword>
<keyword id="KW-1133">Transmembrane helix</keyword>
<feature type="chain" id="PRO_0000410384" description="High osmolarity signaling protein SHO1">
    <location>
        <begin position="1"/>
        <end position="295"/>
    </location>
</feature>
<feature type="topological domain" description="Cytoplasmic" evidence="2">
    <location>
        <begin position="1"/>
        <end position="18"/>
    </location>
</feature>
<feature type="transmembrane region" description="Helical" evidence="2">
    <location>
        <begin position="19"/>
        <end position="39"/>
    </location>
</feature>
<feature type="topological domain" description="Extracellular" evidence="2">
    <location>
        <begin position="40"/>
        <end position="52"/>
    </location>
</feature>
<feature type="transmembrane region" description="Helical" evidence="2">
    <location>
        <begin position="53"/>
        <end position="73"/>
    </location>
</feature>
<feature type="topological domain" description="Cytoplasmic" evidence="2">
    <location>
        <begin position="74"/>
        <end position="81"/>
    </location>
</feature>
<feature type="transmembrane region" description="Helical" evidence="2">
    <location>
        <begin position="82"/>
        <end position="102"/>
    </location>
</feature>
<feature type="topological domain" description="Extracellular" evidence="2">
    <location>
        <begin position="103"/>
        <end position="111"/>
    </location>
</feature>
<feature type="transmembrane region" description="Helical" evidence="2">
    <location>
        <begin position="112"/>
        <end position="132"/>
    </location>
</feature>
<feature type="topological domain" description="Cytoplasmic" evidence="2">
    <location>
        <begin position="133"/>
        <end position="295"/>
    </location>
</feature>
<feature type="domain" description="SH3" evidence="3">
    <location>
        <begin position="236"/>
        <end position="295"/>
    </location>
</feature>
<sequence>MYGGRKGIQMSNILGDPFALATLSIAMLAWCITFVACIIGRIQQTNDSPFPTFAWWGCIYSLCLIVGVFVVIGSDSVHTYHVAVTGYLAAGIVLVSSGVNLLLYSDSGAREAASAGFILLAMVIVIWTFYFGSNPSSTPRAFLDSFALAKESTTIHRSTMNGYGGGGRPETSNSVQPPQMYTSAQLNGFENPSPVGGVSQVGGRGSAVPQSFTNSVMQPKATNSPGADAEVVPPTEYPYRAKAIYSYEANPDDANEISFSKHEILEVSDVSGRWWQARKENGETGIAPSNYLILL</sequence>
<protein>
    <recommendedName>
        <fullName>High osmolarity signaling protein SHO1</fullName>
    </recommendedName>
    <alternativeName>
        <fullName>Osmosensor SHO1</fullName>
    </alternativeName>
</protein>
<accession>C7Z504</accession>
<name>SHO1_FUSV7</name>